<name>ATPD_ECO57</name>
<accession>P0ABA5</accession>
<accession>P00831</accession>
<reference key="1">
    <citation type="journal article" date="2001" name="Nature">
        <title>Genome sequence of enterohaemorrhagic Escherichia coli O157:H7.</title>
        <authorList>
            <person name="Perna N.T."/>
            <person name="Plunkett G. III"/>
            <person name="Burland V."/>
            <person name="Mau B."/>
            <person name="Glasner J.D."/>
            <person name="Rose D.J."/>
            <person name="Mayhew G.F."/>
            <person name="Evans P.S."/>
            <person name="Gregor J."/>
            <person name="Kirkpatrick H.A."/>
            <person name="Posfai G."/>
            <person name="Hackett J."/>
            <person name="Klink S."/>
            <person name="Boutin A."/>
            <person name="Shao Y."/>
            <person name="Miller L."/>
            <person name="Grotbeck E.J."/>
            <person name="Davis N.W."/>
            <person name="Lim A."/>
            <person name="Dimalanta E.T."/>
            <person name="Potamousis K."/>
            <person name="Apodaca J."/>
            <person name="Anantharaman T.S."/>
            <person name="Lin J."/>
            <person name="Yen G."/>
            <person name="Schwartz D.C."/>
            <person name="Welch R.A."/>
            <person name="Blattner F.R."/>
        </authorList>
    </citation>
    <scope>NUCLEOTIDE SEQUENCE [LARGE SCALE GENOMIC DNA]</scope>
    <source>
        <strain>O157:H7 / EDL933 / ATCC 700927 / EHEC</strain>
    </source>
</reference>
<reference key="2">
    <citation type="journal article" date="2001" name="DNA Res.">
        <title>Complete genome sequence of enterohemorrhagic Escherichia coli O157:H7 and genomic comparison with a laboratory strain K-12.</title>
        <authorList>
            <person name="Hayashi T."/>
            <person name="Makino K."/>
            <person name="Ohnishi M."/>
            <person name="Kurokawa K."/>
            <person name="Ishii K."/>
            <person name="Yokoyama K."/>
            <person name="Han C.-G."/>
            <person name="Ohtsubo E."/>
            <person name="Nakayama K."/>
            <person name="Murata T."/>
            <person name="Tanaka M."/>
            <person name="Tobe T."/>
            <person name="Iida T."/>
            <person name="Takami H."/>
            <person name="Honda T."/>
            <person name="Sasakawa C."/>
            <person name="Ogasawara N."/>
            <person name="Yasunaga T."/>
            <person name="Kuhara S."/>
            <person name="Shiba T."/>
            <person name="Hattori M."/>
            <person name="Shinagawa H."/>
        </authorList>
    </citation>
    <scope>NUCLEOTIDE SEQUENCE [LARGE SCALE GENOMIC DNA]</scope>
    <source>
        <strain>O157:H7 / Sakai / RIMD 0509952 / EHEC</strain>
    </source>
</reference>
<proteinExistence type="inferred from homology"/>
<comment type="function">
    <text evidence="1">F(1)F(0) ATP synthase produces ATP from ADP in the presence of a proton or sodium gradient. F-type ATPases consist of two structural domains, F(1) containing the extramembraneous catalytic core and F(0) containing the membrane proton channel, linked together by a central stalk and a peripheral stalk. During catalysis, ATP synthesis in the catalytic domain of F(1) is coupled via a rotary mechanism of the central stalk subunits to proton translocation.</text>
</comment>
<comment type="function">
    <text evidence="1">This protein is part of the stalk that links CF(0) to CF(1). It either transmits conformational changes from CF(0) to CF(1) or is implicated in proton conduction.</text>
</comment>
<comment type="subunit">
    <text evidence="1">F-type ATPases have 2 components, F(1) - the catalytic core - and F(0) - the membrane proton channel. F(1) has five subunits: alpha(3), beta(3), gamma(1), delta(1), epsilon(1). F(0) has three main subunits: a(1), b(2) and c(10-14). The alpha and beta chains form an alternating ring which encloses part of the gamma chain. F(1) is attached to F(0) by a central stalk formed by the gamma and epsilon chains, while a peripheral stalk is formed by the delta and b chains.</text>
</comment>
<comment type="subcellular location">
    <subcellularLocation>
        <location evidence="1">Cell inner membrane</location>
        <topology evidence="1">Peripheral membrane protein</topology>
    </subcellularLocation>
</comment>
<comment type="similarity">
    <text evidence="1">Belongs to the ATPase delta chain family.</text>
</comment>
<gene>
    <name evidence="1" type="primary">atpH</name>
    <name type="ordered locus">Z5233</name>
    <name type="ordered locus">ECs4677</name>
</gene>
<sequence length="177" mass="19332">MSEFITVARPYAKAAFDFAVEHQSVERWQDMLAFAAEVTKNEQMAELLSGALAPETLAESFIAVCGEQLDENGQNLIRVMAENGRLNALPDVLEQFIHLRAVSEATAEVDVISAAALSEQQLAKISAAMEKRLSRKVKLNCKIDKSVMAGVIIRAGDMVIDGSVRGRLERLADVLQS</sequence>
<evidence type="ECO:0000255" key="1">
    <source>
        <dbReference type="HAMAP-Rule" id="MF_01416"/>
    </source>
</evidence>
<dbReference type="EMBL" id="AE005174">
    <property type="protein sequence ID" value="AAG58938.1"/>
    <property type="molecule type" value="Genomic_DNA"/>
</dbReference>
<dbReference type="EMBL" id="BA000007">
    <property type="protein sequence ID" value="BAB38100.1"/>
    <property type="molecule type" value="Genomic_DNA"/>
</dbReference>
<dbReference type="PIR" id="E91213">
    <property type="entry name" value="E91213"/>
</dbReference>
<dbReference type="PIR" id="F86059">
    <property type="entry name" value="F86059"/>
</dbReference>
<dbReference type="RefSeq" id="NP_312704.1">
    <property type="nucleotide sequence ID" value="NC_002695.1"/>
</dbReference>
<dbReference type="RefSeq" id="WP_001288587.1">
    <property type="nucleotide sequence ID" value="NZ_VOAI01000011.1"/>
</dbReference>
<dbReference type="SMR" id="P0ABA5"/>
<dbReference type="STRING" id="155864.Z5233"/>
<dbReference type="GeneID" id="913118"/>
<dbReference type="GeneID" id="93778232"/>
<dbReference type="KEGG" id="ece:Z5233"/>
<dbReference type="KEGG" id="ecs:ECs_4677"/>
<dbReference type="PATRIC" id="fig|386585.9.peg.4882"/>
<dbReference type="eggNOG" id="COG0712">
    <property type="taxonomic scope" value="Bacteria"/>
</dbReference>
<dbReference type="HOGENOM" id="CLU_085114_3_0_6"/>
<dbReference type="OMA" id="MVDNIQD"/>
<dbReference type="EvolutionaryTrace" id="P0ABA5"/>
<dbReference type="Proteomes" id="UP000000558">
    <property type="component" value="Chromosome"/>
</dbReference>
<dbReference type="Proteomes" id="UP000002519">
    <property type="component" value="Chromosome"/>
</dbReference>
<dbReference type="GO" id="GO:0005886">
    <property type="term" value="C:plasma membrane"/>
    <property type="evidence" value="ECO:0007669"/>
    <property type="project" value="UniProtKB-SubCell"/>
</dbReference>
<dbReference type="GO" id="GO:0045259">
    <property type="term" value="C:proton-transporting ATP synthase complex"/>
    <property type="evidence" value="ECO:0007669"/>
    <property type="project" value="UniProtKB-KW"/>
</dbReference>
<dbReference type="GO" id="GO:0046933">
    <property type="term" value="F:proton-transporting ATP synthase activity, rotational mechanism"/>
    <property type="evidence" value="ECO:0007669"/>
    <property type="project" value="UniProtKB-UniRule"/>
</dbReference>
<dbReference type="FunFam" id="1.10.520.20:FF:000001">
    <property type="entry name" value="ATP synthase subunit delta"/>
    <property type="match status" value="1"/>
</dbReference>
<dbReference type="Gene3D" id="1.10.520.20">
    <property type="entry name" value="N-terminal domain of the delta subunit of the F1F0-ATP synthase"/>
    <property type="match status" value="1"/>
</dbReference>
<dbReference type="HAMAP" id="MF_01416">
    <property type="entry name" value="ATP_synth_delta_bact"/>
    <property type="match status" value="1"/>
</dbReference>
<dbReference type="InterPro" id="IPR026015">
    <property type="entry name" value="ATP_synth_OSCP/delta_N_sf"/>
</dbReference>
<dbReference type="InterPro" id="IPR020781">
    <property type="entry name" value="ATPase_OSCP/d_CS"/>
</dbReference>
<dbReference type="InterPro" id="IPR000711">
    <property type="entry name" value="ATPase_OSCP/dsu"/>
</dbReference>
<dbReference type="NCBIfam" id="TIGR01145">
    <property type="entry name" value="ATP_synt_delta"/>
    <property type="match status" value="1"/>
</dbReference>
<dbReference type="NCBIfam" id="NF004402">
    <property type="entry name" value="PRK05758.2-2"/>
    <property type="match status" value="1"/>
</dbReference>
<dbReference type="NCBIfam" id="NF004404">
    <property type="entry name" value="PRK05758.2-5"/>
    <property type="match status" value="1"/>
</dbReference>
<dbReference type="PANTHER" id="PTHR11910">
    <property type="entry name" value="ATP SYNTHASE DELTA CHAIN"/>
    <property type="match status" value="1"/>
</dbReference>
<dbReference type="Pfam" id="PF00213">
    <property type="entry name" value="OSCP"/>
    <property type="match status" value="1"/>
</dbReference>
<dbReference type="PRINTS" id="PR00125">
    <property type="entry name" value="ATPASEDELTA"/>
</dbReference>
<dbReference type="SUPFAM" id="SSF47928">
    <property type="entry name" value="N-terminal domain of the delta subunit of the F1F0-ATP synthase"/>
    <property type="match status" value="1"/>
</dbReference>
<dbReference type="PROSITE" id="PS00389">
    <property type="entry name" value="ATPASE_DELTA"/>
    <property type="match status" value="1"/>
</dbReference>
<keyword id="KW-0066">ATP synthesis</keyword>
<keyword id="KW-0997">Cell inner membrane</keyword>
<keyword id="KW-1003">Cell membrane</keyword>
<keyword id="KW-0139">CF(1)</keyword>
<keyword id="KW-0375">Hydrogen ion transport</keyword>
<keyword id="KW-0406">Ion transport</keyword>
<keyword id="KW-0472">Membrane</keyword>
<keyword id="KW-1185">Reference proteome</keyword>
<keyword id="KW-0813">Transport</keyword>
<organism>
    <name type="scientific">Escherichia coli O157:H7</name>
    <dbReference type="NCBI Taxonomy" id="83334"/>
    <lineage>
        <taxon>Bacteria</taxon>
        <taxon>Pseudomonadati</taxon>
        <taxon>Pseudomonadota</taxon>
        <taxon>Gammaproteobacteria</taxon>
        <taxon>Enterobacterales</taxon>
        <taxon>Enterobacteriaceae</taxon>
        <taxon>Escherichia</taxon>
    </lineage>
</organism>
<feature type="chain" id="PRO_0000193463" description="ATP synthase subunit delta">
    <location>
        <begin position="1"/>
        <end position="177"/>
    </location>
</feature>
<protein>
    <recommendedName>
        <fullName evidence="1">ATP synthase subunit delta</fullName>
    </recommendedName>
    <alternativeName>
        <fullName evidence="1">ATP synthase F(1) sector subunit delta</fullName>
    </alternativeName>
    <alternativeName>
        <fullName evidence="1">F-type ATPase subunit delta</fullName>
        <shortName evidence="1">F-ATPase subunit delta</shortName>
    </alternativeName>
</protein>